<feature type="chain" id="PRO_0000094487" description="Voltage-gated ClC-type chloride channel ClcB">
    <location>
        <begin position="1"/>
        <end position="418"/>
    </location>
</feature>
<feature type="topological domain" description="Cytoplasmic" evidence="2">
    <location>
        <begin position="1"/>
        <end position="4"/>
    </location>
</feature>
<feature type="transmembrane region" description="Helical" evidence="2">
    <location>
        <begin position="5"/>
        <end position="25"/>
    </location>
</feature>
<feature type="topological domain" description="Periplasmic" evidence="2">
    <location>
        <begin position="26"/>
        <end position="53"/>
    </location>
</feature>
<feature type="transmembrane region" description="Helical" evidence="2">
    <location>
        <begin position="54"/>
        <end position="74"/>
    </location>
</feature>
<feature type="topological domain" description="Cytoplasmic" evidence="2">
    <location>
        <begin position="75"/>
        <end position="145"/>
    </location>
</feature>
<feature type="transmembrane region" description="Helical" evidence="2">
    <location>
        <begin position="146"/>
        <end position="166"/>
    </location>
</feature>
<feature type="topological domain" description="Periplasmic" evidence="2">
    <location>
        <begin position="167"/>
        <end position="177"/>
    </location>
</feature>
<feature type="transmembrane region" description="Helical" evidence="2">
    <location>
        <begin position="178"/>
        <end position="200"/>
    </location>
</feature>
<feature type="topological domain" description="Cytoplasmic" evidence="2">
    <location>
        <begin position="201"/>
        <end position="221"/>
    </location>
</feature>
<feature type="transmembrane region" description="Helical" evidence="2">
    <location>
        <begin position="222"/>
        <end position="242"/>
    </location>
</feature>
<feature type="topological domain" description="Periplasmic" evidence="2">
    <location>
        <begin position="243"/>
        <end position="257"/>
    </location>
</feature>
<feature type="transmembrane region" description="Helical" evidence="2">
    <location>
        <begin position="258"/>
        <end position="278"/>
    </location>
</feature>
<feature type="topological domain" description="Cytoplasmic" evidence="2">
    <location>
        <begin position="279"/>
        <end position="290"/>
    </location>
</feature>
<feature type="transmembrane region" description="Helical" evidence="2">
    <location>
        <begin position="291"/>
        <end position="311"/>
    </location>
</feature>
<feature type="topological domain" description="Periplasmic" evidence="2">
    <location>
        <begin position="312"/>
        <end position="315"/>
    </location>
</feature>
<feature type="transmembrane region" description="Helical" evidence="2">
    <location>
        <begin position="316"/>
        <end position="336"/>
    </location>
</feature>
<feature type="topological domain" description="Cytoplasmic" evidence="2">
    <location>
        <begin position="337"/>
        <end position="351"/>
    </location>
</feature>
<feature type="transmembrane region" description="Helical" evidence="2">
    <location>
        <begin position="352"/>
        <end position="372"/>
    </location>
</feature>
<feature type="topological domain" description="Periplasmic" evidence="2">
    <location>
        <begin position="373"/>
        <end position="379"/>
    </location>
</feature>
<feature type="transmembrane region" description="Helical" evidence="2">
    <location>
        <begin position="380"/>
        <end position="400"/>
    </location>
</feature>
<feature type="topological domain" description="Cytoplasmic" evidence="2">
    <location>
        <begin position="401"/>
        <end position="418"/>
    </location>
</feature>
<gene>
    <name type="primary">clcB</name>
    <name type="ordered locus">Z2583</name>
    <name type="ordered locus">ECs2298</name>
</gene>
<protein>
    <recommendedName>
        <fullName>Voltage-gated ClC-type chloride channel ClcB</fullName>
    </recommendedName>
</protein>
<accession>Q8X794</accession>
<keyword id="KW-0997">Cell inner membrane</keyword>
<keyword id="KW-1003">Cell membrane</keyword>
<keyword id="KW-0868">Chloride</keyword>
<keyword id="KW-0869">Chloride channel</keyword>
<keyword id="KW-0407">Ion channel</keyword>
<keyword id="KW-0406">Ion transport</keyword>
<keyword id="KW-0472">Membrane</keyword>
<keyword id="KW-1185">Reference proteome</keyword>
<keyword id="KW-0812">Transmembrane</keyword>
<keyword id="KW-1133">Transmembrane helix</keyword>
<keyword id="KW-0813">Transport</keyword>
<keyword id="KW-0851">Voltage-gated channel</keyword>
<reference key="1">
    <citation type="journal article" date="2001" name="Nature">
        <title>Genome sequence of enterohaemorrhagic Escherichia coli O157:H7.</title>
        <authorList>
            <person name="Perna N.T."/>
            <person name="Plunkett G. III"/>
            <person name="Burland V."/>
            <person name="Mau B."/>
            <person name="Glasner J.D."/>
            <person name="Rose D.J."/>
            <person name="Mayhew G.F."/>
            <person name="Evans P.S."/>
            <person name="Gregor J."/>
            <person name="Kirkpatrick H.A."/>
            <person name="Posfai G."/>
            <person name="Hackett J."/>
            <person name="Klink S."/>
            <person name="Boutin A."/>
            <person name="Shao Y."/>
            <person name="Miller L."/>
            <person name="Grotbeck E.J."/>
            <person name="Davis N.W."/>
            <person name="Lim A."/>
            <person name="Dimalanta E.T."/>
            <person name="Potamousis K."/>
            <person name="Apodaca J."/>
            <person name="Anantharaman T.S."/>
            <person name="Lin J."/>
            <person name="Yen G."/>
            <person name="Schwartz D.C."/>
            <person name="Welch R.A."/>
            <person name="Blattner F.R."/>
        </authorList>
    </citation>
    <scope>NUCLEOTIDE SEQUENCE [LARGE SCALE GENOMIC DNA]</scope>
    <source>
        <strain>O157:H7 / EDL933 / ATCC 700927 / EHEC</strain>
    </source>
</reference>
<reference key="2">
    <citation type="journal article" date="2001" name="DNA Res.">
        <title>Complete genome sequence of enterohemorrhagic Escherichia coli O157:H7 and genomic comparison with a laboratory strain K-12.</title>
        <authorList>
            <person name="Hayashi T."/>
            <person name="Makino K."/>
            <person name="Ohnishi M."/>
            <person name="Kurokawa K."/>
            <person name="Ishii K."/>
            <person name="Yokoyama K."/>
            <person name="Han C.-G."/>
            <person name="Ohtsubo E."/>
            <person name="Nakayama K."/>
            <person name="Murata T."/>
            <person name="Tanaka M."/>
            <person name="Tobe T."/>
            <person name="Iida T."/>
            <person name="Takami H."/>
            <person name="Honda T."/>
            <person name="Sasakawa C."/>
            <person name="Ogasawara N."/>
            <person name="Yasunaga T."/>
            <person name="Kuhara S."/>
            <person name="Shiba T."/>
            <person name="Hattori M."/>
            <person name="Shinagawa H."/>
        </authorList>
    </citation>
    <scope>NUCLEOTIDE SEQUENCE [LARGE SCALE GENOMIC DNA]</scope>
    <source>
        <strain>O157:H7 / Sakai / RIMD 0509952 / EHEC</strain>
    </source>
</reference>
<comment type="function">
    <text evidence="1">Probably acts as an electrical shunt for an outwardly-directed proton pump that is linked to amino acid decarboxylation, as part of the extreme acid resistance (XAR) response.</text>
</comment>
<comment type="subcellular location">
    <subcellularLocation>
        <location evidence="1">Cell inner membrane</location>
        <topology evidence="1">Multi-pass membrane protein</topology>
    </subcellularLocation>
</comment>
<comment type="similarity">
    <text evidence="3">Belongs to the chloride channel (TC 2.A.49) family. ClcB subfamily.</text>
</comment>
<comment type="sequence caution" evidence="3">
    <conflict type="erroneous initiation">
        <sequence resource="EMBL-CDS" id="AAG56579"/>
    </conflict>
</comment>
<comment type="sequence caution" evidence="3">
    <conflict type="erroneous initiation">
        <sequence resource="EMBL-CDS" id="BAB35721"/>
    </conflict>
</comment>
<organism>
    <name type="scientific">Escherichia coli O157:H7</name>
    <dbReference type="NCBI Taxonomy" id="83334"/>
    <lineage>
        <taxon>Bacteria</taxon>
        <taxon>Pseudomonadati</taxon>
        <taxon>Pseudomonadota</taxon>
        <taxon>Gammaproteobacteria</taxon>
        <taxon>Enterobacterales</taxon>
        <taxon>Enterobacteriaceae</taxon>
        <taxon>Escherichia</taxon>
    </lineage>
</organism>
<sequence>MFRRLLIATVVGILAAFAVAGFRHAMLLLEWLFLNNDSGSLVNAATNLSPWRRLLTPALGGLAAGLLLMGWQKFTQQRPHAPTDYMEALQTDGQFDYAASLVKSLASLLVVTSGSAIGREGAMILLAALAASCFAQRFTPRQEWKLWIACGAAAGMAAAYRAPLAGSLFIAEVLFGTMMLASLGPVIISAVVALLVSNLINHSDALLYSVQLSVTVQARDYALIISTGVLAGLCGPLLLTLMNACHRGFVSLKLAPPWQLALGGLIVGLLSLFTPAVWGNGYSTVQSFLTAPPLLMIIAGIFLCKLCAVLASSGSGAPGGVFTPTLFIGLAIGMLYGRSLGLWFPDGEEITLLLGLTGMATLLAATTHAPIMSTLMICEMTGEYQLLPGLLIACVIASVISRTLHRDSIYRQHTAQHS</sequence>
<name>CLCB_ECO57</name>
<evidence type="ECO:0000250" key="1"/>
<evidence type="ECO:0000255" key="2"/>
<evidence type="ECO:0000305" key="3"/>
<proteinExistence type="inferred from homology"/>
<dbReference type="EMBL" id="AE005174">
    <property type="protein sequence ID" value="AAG56579.1"/>
    <property type="status" value="ALT_INIT"/>
    <property type="molecule type" value="Genomic_DNA"/>
</dbReference>
<dbReference type="EMBL" id="BA000007">
    <property type="protein sequence ID" value="BAB35721.1"/>
    <property type="status" value="ALT_INIT"/>
    <property type="molecule type" value="Genomic_DNA"/>
</dbReference>
<dbReference type="PIR" id="B90916">
    <property type="entry name" value="B90916"/>
</dbReference>
<dbReference type="PIR" id="G85764">
    <property type="entry name" value="G85764"/>
</dbReference>
<dbReference type="RefSeq" id="NP_310325.2">
    <property type="nucleotide sequence ID" value="NC_002695.1"/>
</dbReference>
<dbReference type="SMR" id="Q8X794"/>
<dbReference type="STRING" id="155864.Z2583"/>
<dbReference type="GeneID" id="916112"/>
<dbReference type="KEGG" id="ece:Z2583"/>
<dbReference type="KEGG" id="ecs:ECs_2298"/>
<dbReference type="PATRIC" id="fig|386585.9.peg.2406"/>
<dbReference type="eggNOG" id="COG0038">
    <property type="taxonomic scope" value="Bacteria"/>
</dbReference>
<dbReference type="HOGENOM" id="CLU_015263_5_2_6"/>
<dbReference type="OMA" id="VIFVMEV"/>
<dbReference type="Proteomes" id="UP000000558">
    <property type="component" value="Chromosome"/>
</dbReference>
<dbReference type="Proteomes" id="UP000002519">
    <property type="component" value="Chromosome"/>
</dbReference>
<dbReference type="GO" id="GO:0034707">
    <property type="term" value="C:chloride channel complex"/>
    <property type="evidence" value="ECO:0007669"/>
    <property type="project" value="UniProtKB-KW"/>
</dbReference>
<dbReference type="GO" id="GO:0005886">
    <property type="term" value="C:plasma membrane"/>
    <property type="evidence" value="ECO:0007669"/>
    <property type="project" value="UniProtKB-SubCell"/>
</dbReference>
<dbReference type="GO" id="GO:0005247">
    <property type="term" value="F:voltage-gated chloride channel activity"/>
    <property type="evidence" value="ECO:0007669"/>
    <property type="project" value="UniProtKB-UniRule"/>
</dbReference>
<dbReference type="GO" id="GO:0010447">
    <property type="term" value="P:response to acidic pH"/>
    <property type="evidence" value="ECO:0007669"/>
    <property type="project" value="InterPro"/>
</dbReference>
<dbReference type="CDD" id="cd00400">
    <property type="entry name" value="Voltage_gated_ClC"/>
    <property type="match status" value="1"/>
</dbReference>
<dbReference type="FunFam" id="1.10.3080.10:FF:000010">
    <property type="entry name" value="Voltage-gated ClC-type chloride channel ClcB"/>
    <property type="match status" value="1"/>
</dbReference>
<dbReference type="Gene3D" id="1.10.3080.10">
    <property type="entry name" value="Clc chloride channel"/>
    <property type="match status" value="1"/>
</dbReference>
<dbReference type="HAMAP" id="MF_01203">
    <property type="entry name" value="CLC_ClcB"/>
    <property type="match status" value="1"/>
</dbReference>
<dbReference type="InterPro" id="IPR014743">
    <property type="entry name" value="Cl-channel_core"/>
</dbReference>
<dbReference type="InterPro" id="IPR023790">
    <property type="entry name" value="Cl-channel_volt-gated_ClcB"/>
</dbReference>
<dbReference type="InterPro" id="IPR001807">
    <property type="entry name" value="ClC"/>
</dbReference>
<dbReference type="InterPro" id="IPR050368">
    <property type="entry name" value="ClC-type_chloride_channel"/>
</dbReference>
<dbReference type="NCBIfam" id="NF002437">
    <property type="entry name" value="PRK01610.1"/>
    <property type="match status" value="1"/>
</dbReference>
<dbReference type="PANTHER" id="PTHR43427">
    <property type="entry name" value="CHLORIDE CHANNEL PROTEIN CLC-E"/>
    <property type="match status" value="1"/>
</dbReference>
<dbReference type="PANTHER" id="PTHR43427:SF6">
    <property type="entry name" value="CHLORIDE CHANNEL PROTEIN CLC-E"/>
    <property type="match status" value="1"/>
</dbReference>
<dbReference type="Pfam" id="PF00654">
    <property type="entry name" value="Voltage_CLC"/>
    <property type="match status" value="1"/>
</dbReference>
<dbReference type="PRINTS" id="PR00762">
    <property type="entry name" value="CLCHANNEL"/>
</dbReference>
<dbReference type="SUPFAM" id="SSF81340">
    <property type="entry name" value="Clc chloride channel"/>
    <property type="match status" value="1"/>
</dbReference>